<reference key="1">
    <citation type="journal article" date="2006" name="BMC Genomics">
        <title>The genome of the square archaeon Haloquadratum walsbyi: life at the limits of water activity.</title>
        <authorList>
            <person name="Bolhuis H."/>
            <person name="Palm P."/>
            <person name="Wende A."/>
            <person name="Falb M."/>
            <person name="Rampp M."/>
            <person name="Rodriguez-Valera F."/>
            <person name="Pfeiffer F."/>
            <person name="Oesterhelt D."/>
        </authorList>
    </citation>
    <scope>NUCLEOTIDE SEQUENCE [LARGE SCALE GENOMIC DNA]</scope>
    <source>
        <strain>DSM 16790 / HBSQ001</strain>
    </source>
</reference>
<name>NOP10_HALWD</name>
<evidence type="ECO:0000255" key="1">
    <source>
        <dbReference type="HAMAP-Rule" id="MF_00803"/>
    </source>
</evidence>
<sequence>MKSNIKICASWQKKHEQPVYTLADTCPKCNSVTKNTAPAPFDPTDAYGEYRRALKQRVRE</sequence>
<protein>
    <recommendedName>
        <fullName evidence="1">Ribosome biogenesis protein Nop10</fullName>
    </recommendedName>
</protein>
<comment type="function">
    <text evidence="1">Involved in ribosome biogenesis; more specifically in 18S rRNA pseudouridylation and in cleavage of pre-rRNA.</text>
</comment>
<comment type="similarity">
    <text evidence="1">Belongs to the NOP10 family.</text>
</comment>
<feature type="chain" id="PRO_1000148549" description="Ribosome biogenesis protein Nop10">
    <location>
        <begin position="1"/>
        <end position="60"/>
    </location>
</feature>
<proteinExistence type="inferred from homology"/>
<dbReference type="EMBL" id="AM180088">
    <property type="protein sequence ID" value="CAJ51385.1"/>
    <property type="molecule type" value="Genomic_DNA"/>
</dbReference>
<dbReference type="RefSeq" id="WP_011570546.1">
    <property type="nucleotide sequence ID" value="NC_008212.1"/>
</dbReference>
<dbReference type="SMR" id="Q18KQ9"/>
<dbReference type="STRING" id="362976.HQ_1256A"/>
<dbReference type="GeneID" id="4192212"/>
<dbReference type="KEGG" id="hwa:HQ_1256A"/>
<dbReference type="eggNOG" id="arCOG00906">
    <property type="taxonomic scope" value="Archaea"/>
</dbReference>
<dbReference type="HOGENOM" id="CLU_196480_1_0_2"/>
<dbReference type="Proteomes" id="UP000001975">
    <property type="component" value="Chromosome"/>
</dbReference>
<dbReference type="GO" id="GO:1990904">
    <property type="term" value="C:ribonucleoprotein complex"/>
    <property type="evidence" value="ECO:0007669"/>
    <property type="project" value="UniProtKB-KW"/>
</dbReference>
<dbReference type="GO" id="GO:0030515">
    <property type="term" value="F:snoRNA binding"/>
    <property type="evidence" value="ECO:0007669"/>
    <property type="project" value="InterPro"/>
</dbReference>
<dbReference type="GO" id="GO:0001522">
    <property type="term" value="P:pseudouridine synthesis"/>
    <property type="evidence" value="ECO:0007669"/>
    <property type="project" value="InterPro"/>
</dbReference>
<dbReference type="GO" id="GO:0006364">
    <property type="term" value="P:rRNA processing"/>
    <property type="evidence" value="ECO:0007669"/>
    <property type="project" value="UniProtKB-UniRule"/>
</dbReference>
<dbReference type="Gene3D" id="2.20.28.40">
    <property type="entry name" value="H/ACA ribonucleoprotein complex, subunit Nop10"/>
    <property type="match status" value="1"/>
</dbReference>
<dbReference type="HAMAP" id="MF_00803">
    <property type="entry name" value="Nop10"/>
    <property type="match status" value="1"/>
</dbReference>
<dbReference type="InterPro" id="IPR007264">
    <property type="entry name" value="H/ACA_rnp_Nop10"/>
</dbReference>
<dbReference type="InterPro" id="IPR036756">
    <property type="entry name" value="H/ACA_rnp_Nop10_sf"/>
</dbReference>
<dbReference type="InterPro" id="IPR023532">
    <property type="entry name" value="Nop10_arc-typ"/>
</dbReference>
<dbReference type="NCBIfam" id="NF009623">
    <property type="entry name" value="PRK13130.1"/>
    <property type="match status" value="1"/>
</dbReference>
<dbReference type="Pfam" id="PF04135">
    <property type="entry name" value="Nop10p"/>
    <property type="match status" value="1"/>
</dbReference>
<dbReference type="SUPFAM" id="SSF144210">
    <property type="entry name" value="Nop10-like SnoRNP"/>
    <property type="match status" value="1"/>
</dbReference>
<organism>
    <name type="scientific">Haloquadratum walsbyi (strain DSM 16790 / HBSQ001)</name>
    <dbReference type="NCBI Taxonomy" id="362976"/>
    <lineage>
        <taxon>Archaea</taxon>
        <taxon>Methanobacteriati</taxon>
        <taxon>Methanobacteriota</taxon>
        <taxon>Stenosarchaea group</taxon>
        <taxon>Halobacteria</taxon>
        <taxon>Halobacteriales</taxon>
        <taxon>Haloferacaceae</taxon>
        <taxon>Haloquadratum</taxon>
    </lineage>
</organism>
<accession>Q18KQ9</accession>
<keyword id="KW-1185">Reference proteome</keyword>
<keyword id="KW-0687">Ribonucleoprotein</keyword>
<keyword id="KW-0690">Ribosome biogenesis</keyword>
<keyword id="KW-0698">rRNA processing</keyword>
<gene>
    <name evidence="1" type="primary">nop10</name>
    <name type="ordered locus">HQ_1256A</name>
</gene>